<reference key="1">
    <citation type="journal article" date="2011" name="J. Bacteriol.">
        <title>Comparative genomics of 28 Salmonella enterica isolates: evidence for CRISPR-mediated adaptive sublineage evolution.</title>
        <authorList>
            <person name="Fricke W.F."/>
            <person name="Mammel M.K."/>
            <person name="McDermott P.F."/>
            <person name="Tartera C."/>
            <person name="White D.G."/>
            <person name="Leclerc J.E."/>
            <person name="Ravel J."/>
            <person name="Cebula T.A."/>
        </authorList>
    </citation>
    <scope>NUCLEOTIDE SEQUENCE [LARGE SCALE GENOMIC DNA]</scope>
    <source>
        <strain>CT_02021853</strain>
    </source>
</reference>
<evidence type="ECO:0000255" key="1">
    <source>
        <dbReference type="HAMAP-Rule" id="MF_00149"/>
    </source>
</evidence>
<evidence type="ECO:0000256" key="2">
    <source>
        <dbReference type="SAM" id="MobiDB-lite"/>
    </source>
</evidence>
<organism>
    <name type="scientific">Salmonella dublin (strain CT_02021853)</name>
    <dbReference type="NCBI Taxonomy" id="439851"/>
    <lineage>
        <taxon>Bacteria</taxon>
        <taxon>Pseudomonadati</taxon>
        <taxon>Pseudomonadota</taxon>
        <taxon>Gammaproteobacteria</taxon>
        <taxon>Enterobacterales</taxon>
        <taxon>Enterobacteriaceae</taxon>
        <taxon>Salmonella</taxon>
    </lineage>
</organism>
<gene>
    <name evidence="1" type="primary">mutL</name>
    <name type="ordered locus">SeD_A4756</name>
</gene>
<accession>B5FRM6</accession>
<comment type="function">
    <text evidence="1">This protein is involved in the repair of mismatches in DNA. It is required for dam-dependent methyl-directed DNA mismatch repair. May act as a 'molecular matchmaker', a protein that promotes the formation of a stable complex between two or more DNA-binding proteins in an ATP-dependent manner without itself being part of a final effector complex.</text>
</comment>
<comment type="similarity">
    <text evidence="1">Belongs to the DNA mismatch repair MutL/HexB family.</text>
</comment>
<name>MUTL_SALDC</name>
<feature type="chain" id="PRO_1000096680" description="DNA mismatch repair protein MutL">
    <location>
        <begin position="1"/>
        <end position="618"/>
    </location>
</feature>
<feature type="region of interest" description="Disordered" evidence="2">
    <location>
        <begin position="367"/>
        <end position="402"/>
    </location>
</feature>
<feature type="compositionally biased region" description="Low complexity" evidence="2">
    <location>
        <begin position="367"/>
        <end position="381"/>
    </location>
</feature>
<feature type="compositionally biased region" description="Gly residues" evidence="2">
    <location>
        <begin position="382"/>
        <end position="392"/>
    </location>
</feature>
<sequence>MPIQVLPPQLANQIAAGEVVERPASVVKELVENSLDAGATRVDIDIERGGAKLIRIRDNGCGIKKEELALALARHATSKIASLDDLEAIISLGFRGEALASISSVSRLTLTSRTAEQAEAWQAYAEGRDMDVTVKPAAHPVGTTLEVLDLFYNTPARRKFMRTEKTEFNHIDEIIRRIALARFDVTLNLSHNGKLVRQYRAVAKDGQKERRLGAICGTPFLEQALAIEWQHGDLTLRGWVADPNHTTTALTEIQYCYVNGRMMRDRLINHAIRQACEDKLGADQQPAFVLYLEIDPHQVDVNVHPAKHEVRFHQSRLVHDFIYQGVLSVLQQQTETTLPLEEIAPAPRHVPENRIAAGRNHFAVPAEPTAAREPATPRYSGGASGGNGGRQSAGGWPHAQPGYQKQQGEVYRALLQTPATSPAPEPVAPALDGHSQSFGRVLTIVGGDCALLEHAGTIQLLSLPVAERWLRQAQLTPGQSPVCAQPLLIPLRLKVSADEKAALQKAQSLLGELGIEFQSDAQHVTIRAVPLPLRQQNLQILIPELIGYLAQQTTFATVNIAQWIARNVQSEHPQWSMAQAISLLADVERLCPQLVKAPPGGLLQPVDLHSAMNALKHE</sequence>
<dbReference type="EMBL" id="CP001144">
    <property type="protein sequence ID" value="ACH77179.1"/>
    <property type="molecule type" value="Genomic_DNA"/>
</dbReference>
<dbReference type="RefSeq" id="WP_001122550.1">
    <property type="nucleotide sequence ID" value="NC_011205.1"/>
</dbReference>
<dbReference type="SMR" id="B5FRM6"/>
<dbReference type="KEGG" id="sed:SeD_A4756"/>
<dbReference type="HOGENOM" id="CLU_004131_5_1_6"/>
<dbReference type="Proteomes" id="UP000008322">
    <property type="component" value="Chromosome"/>
</dbReference>
<dbReference type="GO" id="GO:0032300">
    <property type="term" value="C:mismatch repair complex"/>
    <property type="evidence" value="ECO:0007669"/>
    <property type="project" value="InterPro"/>
</dbReference>
<dbReference type="GO" id="GO:0005524">
    <property type="term" value="F:ATP binding"/>
    <property type="evidence" value="ECO:0007669"/>
    <property type="project" value="InterPro"/>
</dbReference>
<dbReference type="GO" id="GO:0016887">
    <property type="term" value="F:ATP hydrolysis activity"/>
    <property type="evidence" value="ECO:0007669"/>
    <property type="project" value="InterPro"/>
</dbReference>
<dbReference type="GO" id="GO:0140664">
    <property type="term" value="F:ATP-dependent DNA damage sensor activity"/>
    <property type="evidence" value="ECO:0007669"/>
    <property type="project" value="InterPro"/>
</dbReference>
<dbReference type="GO" id="GO:0030983">
    <property type="term" value="F:mismatched DNA binding"/>
    <property type="evidence" value="ECO:0007669"/>
    <property type="project" value="InterPro"/>
</dbReference>
<dbReference type="GO" id="GO:0006298">
    <property type="term" value="P:mismatch repair"/>
    <property type="evidence" value="ECO:0007669"/>
    <property type="project" value="UniProtKB-UniRule"/>
</dbReference>
<dbReference type="CDD" id="cd16926">
    <property type="entry name" value="HATPase_MutL-MLH-PMS-like"/>
    <property type="match status" value="1"/>
</dbReference>
<dbReference type="CDD" id="cd03482">
    <property type="entry name" value="MutL_Trans_MutL"/>
    <property type="match status" value="1"/>
</dbReference>
<dbReference type="FunFam" id="3.30.230.10:FF:000013">
    <property type="entry name" value="DNA mismatch repair endonuclease MutL"/>
    <property type="match status" value="1"/>
</dbReference>
<dbReference type="FunFam" id="3.30.565.10:FF:000003">
    <property type="entry name" value="DNA mismatch repair endonuclease MutL"/>
    <property type="match status" value="1"/>
</dbReference>
<dbReference type="FunFam" id="3.30.1370.100:FF:000002">
    <property type="entry name" value="DNA mismatch repair protein MutL"/>
    <property type="match status" value="1"/>
</dbReference>
<dbReference type="Gene3D" id="3.30.230.10">
    <property type="match status" value="1"/>
</dbReference>
<dbReference type="Gene3D" id="3.30.565.10">
    <property type="entry name" value="Histidine kinase-like ATPase, C-terminal domain"/>
    <property type="match status" value="1"/>
</dbReference>
<dbReference type="Gene3D" id="3.30.1540.20">
    <property type="entry name" value="MutL, C-terminal domain, dimerisation subdomain"/>
    <property type="match status" value="1"/>
</dbReference>
<dbReference type="Gene3D" id="3.30.1370.100">
    <property type="entry name" value="MutL, C-terminal domain, regulatory subdomain"/>
    <property type="match status" value="1"/>
</dbReference>
<dbReference type="HAMAP" id="MF_00149">
    <property type="entry name" value="DNA_mis_repair"/>
    <property type="match status" value="1"/>
</dbReference>
<dbReference type="InterPro" id="IPR014762">
    <property type="entry name" value="DNA_mismatch_repair_CS"/>
</dbReference>
<dbReference type="InterPro" id="IPR020667">
    <property type="entry name" value="DNA_mismatch_repair_MutL"/>
</dbReference>
<dbReference type="InterPro" id="IPR013507">
    <property type="entry name" value="DNA_mismatch_S5_2-like"/>
</dbReference>
<dbReference type="InterPro" id="IPR036890">
    <property type="entry name" value="HATPase_C_sf"/>
</dbReference>
<dbReference type="InterPro" id="IPR002099">
    <property type="entry name" value="MutL/Mlh/PMS"/>
</dbReference>
<dbReference type="InterPro" id="IPR038973">
    <property type="entry name" value="MutL/Mlh/Pms-like"/>
</dbReference>
<dbReference type="InterPro" id="IPR014790">
    <property type="entry name" value="MutL_C"/>
</dbReference>
<dbReference type="InterPro" id="IPR042120">
    <property type="entry name" value="MutL_C_dimsub"/>
</dbReference>
<dbReference type="InterPro" id="IPR042121">
    <property type="entry name" value="MutL_C_regsub"/>
</dbReference>
<dbReference type="InterPro" id="IPR037198">
    <property type="entry name" value="MutL_C_sf"/>
</dbReference>
<dbReference type="InterPro" id="IPR020568">
    <property type="entry name" value="Ribosomal_Su5_D2-typ_SF"/>
</dbReference>
<dbReference type="InterPro" id="IPR014721">
    <property type="entry name" value="Ribsml_uS5_D2-typ_fold_subgr"/>
</dbReference>
<dbReference type="NCBIfam" id="TIGR00585">
    <property type="entry name" value="mutl"/>
    <property type="match status" value="1"/>
</dbReference>
<dbReference type="NCBIfam" id="NF000948">
    <property type="entry name" value="PRK00095.1-1"/>
    <property type="match status" value="1"/>
</dbReference>
<dbReference type="PANTHER" id="PTHR10073">
    <property type="entry name" value="DNA MISMATCH REPAIR PROTEIN MLH, PMS, MUTL"/>
    <property type="match status" value="1"/>
</dbReference>
<dbReference type="PANTHER" id="PTHR10073:SF12">
    <property type="entry name" value="DNA MISMATCH REPAIR PROTEIN MLH1"/>
    <property type="match status" value="1"/>
</dbReference>
<dbReference type="Pfam" id="PF01119">
    <property type="entry name" value="DNA_mis_repair"/>
    <property type="match status" value="1"/>
</dbReference>
<dbReference type="Pfam" id="PF13589">
    <property type="entry name" value="HATPase_c_3"/>
    <property type="match status" value="1"/>
</dbReference>
<dbReference type="Pfam" id="PF08676">
    <property type="entry name" value="MutL_C"/>
    <property type="match status" value="1"/>
</dbReference>
<dbReference type="SMART" id="SM01340">
    <property type="entry name" value="DNA_mis_repair"/>
    <property type="match status" value="1"/>
</dbReference>
<dbReference type="SMART" id="SM00853">
    <property type="entry name" value="MutL_C"/>
    <property type="match status" value="1"/>
</dbReference>
<dbReference type="SUPFAM" id="SSF55874">
    <property type="entry name" value="ATPase domain of HSP90 chaperone/DNA topoisomerase II/histidine kinase"/>
    <property type="match status" value="1"/>
</dbReference>
<dbReference type="SUPFAM" id="SSF118116">
    <property type="entry name" value="DNA mismatch repair protein MutL"/>
    <property type="match status" value="1"/>
</dbReference>
<dbReference type="SUPFAM" id="SSF54211">
    <property type="entry name" value="Ribosomal protein S5 domain 2-like"/>
    <property type="match status" value="1"/>
</dbReference>
<dbReference type="PROSITE" id="PS00058">
    <property type="entry name" value="DNA_MISMATCH_REPAIR_1"/>
    <property type="match status" value="1"/>
</dbReference>
<keyword id="KW-0227">DNA damage</keyword>
<keyword id="KW-0234">DNA repair</keyword>
<protein>
    <recommendedName>
        <fullName evidence="1">DNA mismatch repair protein MutL</fullName>
    </recommendedName>
</protein>
<proteinExistence type="inferred from homology"/>